<organism>
    <name type="scientific">Pseudechis australis</name>
    <name type="common">Mulga snake</name>
    <name type="synonym">King brown snake</name>
    <dbReference type="NCBI Taxonomy" id="8670"/>
    <lineage>
        <taxon>Eukaryota</taxon>
        <taxon>Metazoa</taxon>
        <taxon>Chordata</taxon>
        <taxon>Craniata</taxon>
        <taxon>Vertebrata</taxon>
        <taxon>Euteleostomi</taxon>
        <taxon>Lepidosauria</taxon>
        <taxon>Squamata</taxon>
        <taxon>Bifurcata</taxon>
        <taxon>Unidentata</taxon>
        <taxon>Episquamata</taxon>
        <taxon>Toxicofera</taxon>
        <taxon>Serpentes</taxon>
        <taxon>Colubroidea</taxon>
        <taxon>Elapidae</taxon>
        <taxon>Hydrophiinae</taxon>
        <taxon>Pseudechis</taxon>
    </lineage>
</organism>
<keyword id="KW-1015">Disulfide bond</keyword>
<keyword id="KW-0646">Protease inhibitor</keyword>
<keyword id="KW-0964">Secreted</keyword>
<keyword id="KW-0722">Serine protease inhibitor</keyword>
<keyword id="KW-0732">Signal</keyword>
<keyword id="KW-0800">Toxin</keyword>
<sequence length="83" mass="9144">MSSGGLLLLLGLLTLWEGLTPVSSKDHPRFCELPADPGPCNGLFQAFYYNPVQRTCLKFRYGGCKGNPNTFKTIEECKRTCAA</sequence>
<protein>
    <recommendedName>
        <fullName>Kunitz-type serine protease inhibitor mulgin-4</fullName>
    </recommendedName>
</protein>
<comment type="function">
    <text evidence="1">Serine protease inhibitor.</text>
</comment>
<comment type="subcellular location">
    <subcellularLocation>
        <location evidence="1">Secreted</location>
    </subcellularLocation>
</comment>
<comment type="tissue specificity">
    <text>Expressed by the venom gland.</text>
</comment>
<comment type="similarity">
    <text evidence="4">Belongs to the venom Kunitz-type family.</text>
</comment>
<accession>Q6ITB8</accession>
<proteinExistence type="evidence at transcript level"/>
<evidence type="ECO:0000250" key="1"/>
<evidence type="ECO:0000255" key="2"/>
<evidence type="ECO:0000255" key="3">
    <source>
        <dbReference type="PROSITE-ProRule" id="PRU00031"/>
    </source>
</evidence>
<evidence type="ECO:0000305" key="4"/>
<name>VKT4_PSEAU</name>
<dbReference type="EMBL" id="AY626927">
    <property type="protein sequence ID" value="AAT45403.1"/>
    <property type="molecule type" value="mRNA"/>
</dbReference>
<dbReference type="SMR" id="Q6ITB8"/>
<dbReference type="MEROPS" id="I02.052"/>
<dbReference type="GO" id="GO:0005615">
    <property type="term" value="C:extracellular space"/>
    <property type="evidence" value="ECO:0007669"/>
    <property type="project" value="TreeGrafter"/>
</dbReference>
<dbReference type="GO" id="GO:0004867">
    <property type="term" value="F:serine-type endopeptidase inhibitor activity"/>
    <property type="evidence" value="ECO:0007669"/>
    <property type="project" value="UniProtKB-KW"/>
</dbReference>
<dbReference type="GO" id="GO:0090729">
    <property type="term" value="F:toxin activity"/>
    <property type="evidence" value="ECO:0007669"/>
    <property type="project" value="UniProtKB-KW"/>
</dbReference>
<dbReference type="CDD" id="cd22594">
    <property type="entry name" value="Kunitz_textilinin-like"/>
    <property type="match status" value="1"/>
</dbReference>
<dbReference type="FunFam" id="4.10.410.10:FF:000004">
    <property type="entry name" value="Tissue factor pathway inhibitor"/>
    <property type="match status" value="1"/>
</dbReference>
<dbReference type="Gene3D" id="4.10.410.10">
    <property type="entry name" value="Pancreatic trypsin inhibitor Kunitz domain"/>
    <property type="match status" value="1"/>
</dbReference>
<dbReference type="InterPro" id="IPR002223">
    <property type="entry name" value="Kunitz_BPTI"/>
</dbReference>
<dbReference type="InterPro" id="IPR036880">
    <property type="entry name" value="Kunitz_BPTI_sf"/>
</dbReference>
<dbReference type="InterPro" id="IPR020901">
    <property type="entry name" value="Prtase_inh_Kunz-CS"/>
</dbReference>
<dbReference type="InterPro" id="IPR050098">
    <property type="entry name" value="TFPI/VKTCI-like"/>
</dbReference>
<dbReference type="PANTHER" id="PTHR10083:SF374">
    <property type="entry name" value="BPTI_KUNITZ INHIBITOR DOMAIN-CONTAINING PROTEIN"/>
    <property type="match status" value="1"/>
</dbReference>
<dbReference type="PANTHER" id="PTHR10083">
    <property type="entry name" value="KUNITZ-TYPE PROTEASE INHIBITOR-RELATED"/>
    <property type="match status" value="1"/>
</dbReference>
<dbReference type="Pfam" id="PF00014">
    <property type="entry name" value="Kunitz_BPTI"/>
    <property type="match status" value="1"/>
</dbReference>
<dbReference type="PRINTS" id="PR00759">
    <property type="entry name" value="BASICPTASE"/>
</dbReference>
<dbReference type="SMART" id="SM00131">
    <property type="entry name" value="KU"/>
    <property type="match status" value="1"/>
</dbReference>
<dbReference type="SUPFAM" id="SSF57362">
    <property type="entry name" value="BPTI-like"/>
    <property type="match status" value="1"/>
</dbReference>
<dbReference type="PROSITE" id="PS00280">
    <property type="entry name" value="BPTI_KUNITZ_1"/>
    <property type="match status" value="1"/>
</dbReference>
<dbReference type="PROSITE" id="PS50279">
    <property type="entry name" value="BPTI_KUNITZ_2"/>
    <property type="match status" value="1"/>
</dbReference>
<feature type="signal peptide" evidence="2">
    <location>
        <begin position="1"/>
        <end position="24"/>
    </location>
</feature>
<feature type="chain" id="PRO_0000377476" description="Kunitz-type serine protease inhibitor mulgin-4">
    <location>
        <begin position="25"/>
        <end position="83"/>
    </location>
</feature>
<feature type="domain" description="BPTI/Kunitz inhibitor" evidence="3">
    <location>
        <begin position="31"/>
        <end position="81"/>
    </location>
</feature>
<feature type="site" description="Reactive bond for chymotrypsin" evidence="1">
    <location>
        <begin position="41"/>
        <end position="42"/>
    </location>
</feature>
<feature type="disulfide bond" evidence="3">
    <location>
        <begin position="31"/>
        <end position="81"/>
    </location>
</feature>
<feature type="disulfide bond" evidence="3">
    <location>
        <begin position="40"/>
        <end position="64"/>
    </location>
</feature>
<feature type="disulfide bond" evidence="3">
    <location>
        <begin position="56"/>
        <end position="77"/>
    </location>
</feature>
<reference key="1">
    <citation type="submission" date="2004-05" db="EMBL/GenBank/DDBJ databases">
        <title>Mulga snake venom gland cDNA encoding mulgin-4.</title>
        <authorList>
            <person name="Filippovich I."/>
            <person name="Sorokina N.I."/>
        </authorList>
    </citation>
    <scope>NUCLEOTIDE SEQUENCE [MRNA]</scope>
    <source>
        <tissue>Venom gland</tissue>
    </source>
</reference>